<feature type="chain" id="PRO_0000089732" description="GPI-N-acetylgalactosamine transferase PGAP4">
    <location>
        <begin position="1"/>
        <end position="403"/>
    </location>
</feature>
<feature type="topological domain" description="Cytoplasmic" evidence="1">
    <location>
        <begin position="1"/>
        <end position="22"/>
    </location>
</feature>
<feature type="transmembrane region" description="Helical" evidence="2">
    <location>
        <begin position="23"/>
        <end position="43"/>
    </location>
</feature>
<feature type="topological domain" description="Lumenal" evidence="1">
    <location>
        <begin position="44"/>
        <end position="264"/>
    </location>
</feature>
<feature type="transmembrane region" description="Helical" evidence="2">
    <location>
        <begin position="265"/>
        <end position="285"/>
    </location>
</feature>
<feature type="topological domain" description="Cytoplasmic" evidence="1">
    <location>
        <begin position="286"/>
        <end position="287"/>
    </location>
</feature>
<feature type="transmembrane region" description="Helical" evidence="2">
    <location>
        <begin position="288"/>
        <end position="308"/>
    </location>
</feature>
<feature type="topological domain" description="Lumenal" evidence="1">
    <location>
        <begin position="309"/>
        <end position="403"/>
    </location>
</feature>
<feature type="short sequence motif" description="DXD motif" evidence="1">
    <location>
        <begin position="211"/>
        <end position="213"/>
    </location>
</feature>
<feature type="binding site" evidence="1">
    <location>
        <position position="109"/>
    </location>
    <ligand>
        <name>UDP-N-acetyl-alpha-D-galactosamine</name>
        <dbReference type="ChEBI" id="CHEBI:67138"/>
    </ligand>
</feature>
<feature type="binding site" evidence="1">
    <location>
        <position position="334"/>
    </location>
    <ligand>
        <name>UDP-N-acetyl-alpha-D-galactosamine</name>
        <dbReference type="ChEBI" id="CHEBI:67138"/>
    </ligand>
</feature>
<feature type="binding site" evidence="1">
    <location>
        <position position="335"/>
    </location>
    <ligand>
        <name>UDP-N-acetyl-alpha-D-galactosamine</name>
        <dbReference type="ChEBI" id="CHEBI:67138"/>
    </ligand>
</feature>
<feature type="binding site" evidence="1">
    <location>
        <position position="362"/>
    </location>
    <ligand>
        <name>UDP-N-acetyl-alpha-D-galactosamine</name>
        <dbReference type="ChEBI" id="CHEBI:67138"/>
    </ligand>
</feature>
<feature type="disulfide bond" evidence="1">
    <location>
        <begin position="132"/>
        <end position="136"/>
    </location>
</feature>
<feature type="disulfide bond" evidence="1">
    <location>
        <begin position="144"/>
        <end position="194"/>
    </location>
</feature>
<feature type="disulfide bond" evidence="1">
    <location>
        <begin position="332"/>
        <end position="333"/>
    </location>
</feature>
<feature type="sequence conflict" description="In Ref. 1; BAB28725." evidence="3" ref="1">
    <original>V</original>
    <variation>G</variation>
    <location>
        <position position="32"/>
    </location>
</feature>
<organism>
    <name type="scientific">Mus musculus</name>
    <name type="common">Mouse</name>
    <dbReference type="NCBI Taxonomy" id="10090"/>
    <lineage>
        <taxon>Eukaryota</taxon>
        <taxon>Metazoa</taxon>
        <taxon>Chordata</taxon>
        <taxon>Craniata</taxon>
        <taxon>Vertebrata</taxon>
        <taxon>Euteleostomi</taxon>
        <taxon>Mammalia</taxon>
        <taxon>Eutheria</taxon>
        <taxon>Euarchontoglires</taxon>
        <taxon>Glires</taxon>
        <taxon>Rodentia</taxon>
        <taxon>Myomorpha</taxon>
        <taxon>Muroidea</taxon>
        <taxon>Muridae</taxon>
        <taxon>Murinae</taxon>
        <taxon>Mus</taxon>
        <taxon>Mus</taxon>
    </lineage>
</organism>
<dbReference type="EC" id="2.4.1.-" evidence="1"/>
<dbReference type="EMBL" id="BC013800">
    <property type="protein sequence ID" value="AAH13800.1"/>
    <property type="molecule type" value="mRNA"/>
</dbReference>
<dbReference type="EMBL" id="AK013226">
    <property type="protein sequence ID" value="BAB28725.1"/>
    <property type="molecule type" value="mRNA"/>
</dbReference>
<dbReference type="EMBL" id="AK038514">
    <property type="protein sequence ID" value="BAC30023.1"/>
    <property type="molecule type" value="mRNA"/>
</dbReference>
<dbReference type="EMBL" id="AK039788">
    <property type="protein sequence ID" value="BAC30454.1"/>
    <property type="molecule type" value="mRNA"/>
</dbReference>
<dbReference type="EMBL" id="AK042679">
    <property type="protein sequence ID" value="BAC31328.1"/>
    <property type="molecule type" value="mRNA"/>
</dbReference>
<dbReference type="EMBL" id="AK045523">
    <property type="protein sequence ID" value="BAC32406.1"/>
    <property type="molecule type" value="mRNA"/>
</dbReference>
<dbReference type="EMBL" id="AK075994">
    <property type="protein sequence ID" value="BAC36105.1"/>
    <property type="molecule type" value="mRNA"/>
</dbReference>
<dbReference type="EMBL" id="AK165526">
    <property type="protein sequence ID" value="BAE38239.1"/>
    <property type="molecule type" value="mRNA"/>
</dbReference>
<dbReference type="CCDS" id="CCDS18177.1"/>
<dbReference type="RefSeq" id="NP_001342432.1">
    <property type="nucleotide sequence ID" value="NM_001355503.1"/>
</dbReference>
<dbReference type="RefSeq" id="NP_080220.2">
    <property type="nucleotide sequence ID" value="NM_025944.3"/>
</dbReference>
<dbReference type="RefSeq" id="XP_006538257.1">
    <property type="nucleotide sequence ID" value="XM_006538194.3"/>
</dbReference>
<dbReference type="RefSeq" id="XP_006538258.1">
    <property type="nucleotide sequence ID" value="XM_006538195.4"/>
</dbReference>
<dbReference type="FunCoup" id="Q91YV9">
    <property type="interactions" value="364"/>
</dbReference>
<dbReference type="STRING" id="10090.ENSMUSP00000040885"/>
<dbReference type="PhosphoSitePlus" id="Q91YV9"/>
<dbReference type="PaxDb" id="10090-ENSMUSP00000040885"/>
<dbReference type="ProteomicsDB" id="259556"/>
<dbReference type="Antibodypedia" id="54396">
    <property type="antibodies" value="20 antibodies from 8 providers"/>
</dbReference>
<dbReference type="DNASU" id="67063"/>
<dbReference type="Ensembl" id="ENSMUST00000042750.3">
    <property type="protein sequence ID" value="ENSMUSP00000040885.3"/>
    <property type="gene ID" value="ENSMUSG00000039611.3"/>
</dbReference>
<dbReference type="GeneID" id="67063"/>
<dbReference type="KEGG" id="mmu:67063"/>
<dbReference type="UCSC" id="uc008svx.2">
    <property type="organism name" value="mouse"/>
</dbReference>
<dbReference type="AGR" id="MGI:1914313"/>
<dbReference type="CTD" id="84302"/>
<dbReference type="MGI" id="MGI:1914313">
    <property type="gene designation" value="Pgap4"/>
</dbReference>
<dbReference type="VEuPathDB" id="HostDB:ENSMUSG00000039611"/>
<dbReference type="eggNOG" id="ENOG502QT3K">
    <property type="taxonomic scope" value="Eukaryota"/>
</dbReference>
<dbReference type="GeneTree" id="ENSGT00500000045018"/>
<dbReference type="HOGENOM" id="CLU_049086_0_0_1"/>
<dbReference type="InParanoid" id="Q91YV9"/>
<dbReference type="OMA" id="YWNPCSF"/>
<dbReference type="OrthoDB" id="2016523at2759"/>
<dbReference type="PhylomeDB" id="Q91YV9"/>
<dbReference type="TreeFam" id="TF313998"/>
<dbReference type="BioGRID-ORCS" id="67063">
    <property type="hits" value="2 hits in 77 CRISPR screens"/>
</dbReference>
<dbReference type="ChiTaRS" id="Tmem246">
    <property type="organism name" value="mouse"/>
</dbReference>
<dbReference type="PRO" id="PR:Q91YV9"/>
<dbReference type="Proteomes" id="UP000000589">
    <property type="component" value="Chromosome 4"/>
</dbReference>
<dbReference type="RNAct" id="Q91YV9">
    <property type="molecule type" value="protein"/>
</dbReference>
<dbReference type="Bgee" id="ENSMUSG00000039611">
    <property type="expression patterns" value="Expressed in epithelium of stomach and 262 other cell types or tissues"/>
</dbReference>
<dbReference type="ExpressionAtlas" id="Q91YV9">
    <property type="expression patterns" value="baseline and differential"/>
</dbReference>
<dbReference type="GO" id="GO:0000139">
    <property type="term" value="C:Golgi membrane"/>
    <property type="evidence" value="ECO:0000250"/>
    <property type="project" value="UniProtKB"/>
</dbReference>
<dbReference type="GO" id="GO:0016757">
    <property type="term" value="F:glycosyltransferase activity"/>
    <property type="evidence" value="ECO:0000250"/>
    <property type="project" value="UniProtKB"/>
</dbReference>
<dbReference type="GO" id="GO:0006506">
    <property type="term" value="P:GPI anchor biosynthetic process"/>
    <property type="evidence" value="ECO:0000250"/>
    <property type="project" value="UniProtKB"/>
</dbReference>
<dbReference type="CDD" id="cd22190">
    <property type="entry name" value="PGAP4"/>
    <property type="match status" value="1"/>
</dbReference>
<dbReference type="InterPro" id="IPR029675">
    <property type="entry name" value="PGAP4"/>
</dbReference>
<dbReference type="PANTHER" id="PTHR31410:SF1">
    <property type="entry name" value="POST-GPI ATTACHMENT TO PROTEINS FACTOR 4"/>
    <property type="match status" value="1"/>
</dbReference>
<dbReference type="PANTHER" id="PTHR31410">
    <property type="entry name" value="TRANSMEMBRANE PROTEIN 246"/>
    <property type="match status" value="1"/>
</dbReference>
<accession>Q91YV9</accession>
<accession>Q3TN50</accession>
<accession>Q9CYX3</accession>
<keyword id="KW-1015">Disulfide bond</keyword>
<keyword id="KW-0333">Golgi apparatus</keyword>
<keyword id="KW-0472">Membrane</keyword>
<keyword id="KW-1185">Reference proteome</keyword>
<keyword id="KW-0808">Transferase</keyword>
<keyword id="KW-0812">Transmembrane</keyword>
<keyword id="KW-1133">Transmembrane helix</keyword>
<proteinExistence type="evidence at transcript level"/>
<gene>
    <name evidence="4" type="primary">Pgap4</name>
    <name evidence="4" type="synonym">Tmem246</name>
</gene>
<comment type="function">
    <text evidence="1">Golgi-resident glycosylphosphatidylinositol (GPI)-N-acetylgalactosamine transferase that catalyzes the N-acetyl-beta-D-galactosamine transfer from an UDP-N-acetyl-alpha-D-galactosamine to the 4-OH-position of first mannose of the glycosylphosphatidylinositol (GPI) of a GPI-anchored protein (GPI-AP). This modification occurs after the fatty acid remodeling step of the GPI-anchor maturation.</text>
</comment>
<comment type="subcellular location">
    <subcellularLocation>
        <location evidence="1">Golgi apparatus membrane</location>
        <topology evidence="2">Multi-pass membrane protein</topology>
    </subcellularLocation>
</comment>
<comment type="domain">
    <text evidence="1">Contains three transmembrane domains, including a tandem transmembrane domain insertion into its glycosyltransferase-A fold. Transmembrane domain 1 functions as a signal for Golgi targeting.</text>
</comment>
<comment type="domain">
    <text evidence="1">The conserved DXD motif is involved in enzyme activity.</text>
</comment>
<comment type="PTM">
    <text evidence="1">Glycosylated.</text>
</comment>
<comment type="similarity">
    <text evidence="3">Belongs to the PGAP4 family.</text>
</comment>
<evidence type="ECO:0000250" key="1">
    <source>
        <dbReference type="UniProtKB" id="Q9BRR3"/>
    </source>
</evidence>
<evidence type="ECO:0000255" key="2"/>
<evidence type="ECO:0000305" key="3"/>
<evidence type="ECO:0000312" key="4">
    <source>
        <dbReference type="MGI" id="MGI:1914313"/>
    </source>
</evidence>
<reference key="1">
    <citation type="journal article" date="2005" name="Science">
        <title>The transcriptional landscape of the mammalian genome.</title>
        <authorList>
            <person name="Carninci P."/>
            <person name="Kasukawa T."/>
            <person name="Katayama S."/>
            <person name="Gough J."/>
            <person name="Frith M.C."/>
            <person name="Maeda N."/>
            <person name="Oyama R."/>
            <person name="Ravasi T."/>
            <person name="Lenhard B."/>
            <person name="Wells C."/>
            <person name="Kodzius R."/>
            <person name="Shimokawa K."/>
            <person name="Bajic V.B."/>
            <person name="Brenner S.E."/>
            <person name="Batalov S."/>
            <person name="Forrest A.R."/>
            <person name="Zavolan M."/>
            <person name="Davis M.J."/>
            <person name="Wilming L.G."/>
            <person name="Aidinis V."/>
            <person name="Allen J.E."/>
            <person name="Ambesi-Impiombato A."/>
            <person name="Apweiler R."/>
            <person name="Aturaliya R.N."/>
            <person name="Bailey T.L."/>
            <person name="Bansal M."/>
            <person name="Baxter L."/>
            <person name="Beisel K.W."/>
            <person name="Bersano T."/>
            <person name="Bono H."/>
            <person name="Chalk A.M."/>
            <person name="Chiu K.P."/>
            <person name="Choudhary V."/>
            <person name="Christoffels A."/>
            <person name="Clutterbuck D.R."/>
            <person name="Crowe M.L."/>
            <person name="Dalla E."/>
            <person name="Dalrymple B.P."/>
            <person name="de Bono B."/>
            <person name="Della Gatta G."/>
            <person name="di Bernardo D."/>
            <person name="Down T."/>
            <person name="Engstrom P."/>
            <person name="Fagiolini M."/>
            <person name="Faulkner G."/>
            <person name="Fletcher C.F."/>
            <person name="Fukushima T."/>
            <person name="Furuno M."/>
            <person name="Futaki S."/>
            <person name="Gariboldi M."/>
            <person name="Georgii-Hemming P."/>
            <person name="Gingeras T.R."/>
            <person name="Gojobori T."/>
            <person name="Green R.E."/>
            <person name="Gustincich S."/>
            <person name="Harbers M."/>
            <person name="Hayashi Y."/>
            <person name="Hensch T.K."/>
            <person name="Hirokawa N."/>
            <person name="Hill D."/>
            <person name="Huminiecki L."/>
            <person name="Iacono M."/>
            <person name="Ikeo K."/>
            <person name="Iwama A."/>
            <person name="Ishikawa T."/>
            <person name="Jakt M."/>
            <person name="Kanapin A."/>
            <person name="Katoh M."/>
            <person name="Kawasawa Y."/>
            <person name="Kelso J."/>
            <person name="Kitamura H."/>
            <person name="Kitano H."/>
            <person name="Kollias G."/>
            <person name="Krishnan S.P."/>
            <person name="Kruger A."/>
            <person name="Kummerfeld S.K."/>
            <person name="Kurochkin I.V."/>
            <person name="Lareau L.F."/>
            <person name="Lazarevic D."/>
            <person name="Lipovich L."/>
            <person name="Liu J."/>
            <person name="Liuni S."/>
            <person name="McWilliam S."/>
            <person name="Madan Babu M."/>
            <person name="Madera M."/>
            <person name="Marchionni L."/>
            <person name="Matsuda H."/>
            <person name="Matsuzawa S."/>
            <person name="Miki H."/>
            <person name="Mignone F."/>
            <person name="Miyake S."/>
            <person name="Morris K."/>
            <person name="Mottagui-Tabar S."/>
            <person name="Mulder N."/>
            <person name="Nakano N."/>
            <person name="Nakauchi H."/>
            <person name="Ng P."/>
            <person name="Nilsson R."/>
            <person name="Nishiguchi S."/>
            <person name="Nishikawa S."/>
            <person name="Nori F."/>
            <person name="Ohara O."/>
            <person name="Okazaki Y."/>
            <person name="Orlando V."/>
            <person name="Pang K.C."/>
            <person name="Pavan W.J."/>
            <person name="Pavesi G."/>
            <person name="Pesole G."/>
            <person name="Petrovsky N."/>
            <person name="Piazza S."/>
            <person name="Reed J."/>
            <person name="Reid J.F."/>
            <person name="Ring B.Z."/>
            <person name="Ringwald M."/>
            <person name="Rost B."/>
            <person name="Ruan Y."/>
            <person name="Salzberg S.L."/>
            <person name="Sandelin A."/>
            <person name="Schneider C."/>
            <person name="Schoenbach C."/>
            <person name="Sekiguchi K."/>
            <person name="Semple C.A."/>
            <person name="Seno S."/>
            <person name="Sessa L."/>
            <person name="Sheng Y."/>
            <person name="Shibata Y."/>
            <person name="Shimada H."/>
            <person name="Shimada K."/>
            <person name="Silva D."/>
            <person name="Sinclair B."/>
            <person name="Sperling S."/>
            <person name="Stupka E."/>
            <person name="Sugiura K."/>
            <person name="Sultana R."/>
            <person name="Takenaka Y."/>
            <person name="Taki K."/>
            <person name="Tammoja K."/>
            <person name="Tan S.L."/>
            <person name="Tang S."/>
            <person name="Taylor M.S."/>
            <person name="Tegner J."/>
            <person name="Teichmann S.A."/>
            <person name="Ueda H.R."/>
            <person name="van Nimwegen E."/>
            <person name="Verardo R."/>
            <person name="Wei C.L."/>
            <person name="Yagi K."/>
            <person name="Yamanishi H."/>
            <person name="Zabarovsky E."/>
            <person name="Zhu S."/>
            <person name="Zimmer A."/>
            <person name="Hide W."/>
            <person name="Bult C."/>
            <person name="Grimmond S.M."/>
            <person name="Teasdale R.D."/>
            <person name="Liu E.T."/>
            <person name="Brusic V."/>
            <person name="Quackenbush J."/>
            <person name="Wahlestedt C."/>
            <person name="Mattick J.S."/>
            <person name="Hume D.A."/>
            <person name="Kai C."/>
            <person name="Sasaki D."/>
            <person name="Tomaru Y."/>
            <person name="Fukuda S."/>
            <person name="Kanamori-Katayama M."/>
            <person name="Suzuki M."/>
            <person name="Aoki J."/>
            <person name="Arakawa T."/>
            <person name="Iida J."/>
            <person name="Imamura K."/>
            <person name="Itoh M."/>
            <person name="Kato T."/>
            <person name="Kawaji H."/>
            <person name="Kawagashira N."/>
            <person name="Kawashima T."/>
            <person name="Kojima M."/>
            <person name="Kondo S."/>
            <person name="Konno H."/>
            <person name="Nakano K."/>
            <person name="Ninomiya N."/>
            <person name="Nishio T."/>
            <person name="Okada M."/>
            <person name="Plessy C."/>
            <person name="Shibata K."/>
            <person name="Shiraki T."/>
            <person name="Suzuki S."/>
            <person name="Tagami M."/>
            <person name="Waki K."/>
            <person name="Watahiki A."/>
            <person name="Okamura-Oho Y."/>
            <person name="Suzuki H."/>
            <person name="Kawai J."/>
            <person name="Hayashizaki Y."/>
        </authorList>
    </citation>
    <scope>NUCLEOTIDE SEQUENCE [LARGE SCALE MRNA]</scope>
    <source>
        <strain>C57BL/6J</strain>
        <tissue>Cerebellum</tissue>
        <tissue>Corpora quadrigemina</tissue>
        <tissue>Hypothalamus</tissue>
        <tissue>Spinal cord</tissue>
    </source>
</reference>
<reference key="2">
    <citation type="journal article" date="2004" name="Genome Res.">
        <title>The status, quality, and expansion of the NIH full-length cDNA project: the Mammalian Gene Collection (MGC).</title>
        <authorList>
            <consortium name="The MGC Project Team"/>
        </authorList>
    </citation>
    <scope>NUCLEOTIDE SEQUENCE [LARGE SCALE MRNA]</scope>
    <source>
        <strain>129</strain>
        <tissue>Mammary tumor</tissue>
    </source>
</reference>
<name>PGAP4_MOUSE</name>
<sequence length="403" mass="46592">MTTSTSPAAMLLRRLRRLSWGSTAVQLFILTVVTFGLLAPLACHRLLHSYFYLRHWHLNQMSQDFLQQSLKEGEAALHYFEELPSANGSVPIVWQATPRPWLVITIITVDRQPGFHYVLQVVSQFHRLLQQCGPQCEGHQLFLCNVERSVSHFDAKLLSKYVPVANRYEGTEDDYGDDPSTNSFEKEKQDYVYCLESSLQTYNPDYVLMVEDDAIPEEQIFPVLEHLLRARFSEPHLQDALYLKLYHPERLQHYINPEPMRILEWVGVGMLLGPVLTWIYMRFACRPGFSWPVMLFFCLYSMGLVELVGRHYFLELRRLSPSLYSVVPASQCCTPAMLFPAPAARRTLTYLSQVYCHKGFGKDMALYSLLRAKGERAYVVEPNLVKHIGLFSSLRYNFHPSLL</sequence>
<protein>
    <recommendedName>
        <fullName evidence="3">GPI-N-acetylgalactosamine transferase PGAP4</fullName>
        <shortName evidence="1">GPI-GalNAc transferase PGAP4</shortName>
        <ecNumber evidence="1">2.4.1.-</ecNumber>
    </recommendedName>
    <alternativeName>
        <fullName evidence="3">Post-GPI attachment to proteins GalNAc transferase 4</fullName>
    </alternativeName>
    <alternativeName>
        <fullName evidence="3">Post-GPI attachment to proteins factor 4</fullName>
    </alternativeName>
    <alternativeName>
        <fullName>Transmembrane protein 246</fullName>
    </alternativeName>
</protein>